<sequence>MSFVWVEESKECSEQRKGSMWKLKIAQGGKDPYLYSTNNYVGRQTWEFDPEAGTPEERAEVEAARLNFYNNRYRVKPSADLLYRMQFLKEKNFKQTIPPVKVEDGEEITYETATTALKRAVHFYSALQASDGHWPAENSGPLFFLPPLVMCLYITGHLNTVFPAEHQREILRYIYYHQNEDGGWGLHIEGHSTMFCTALSYICMRILGEGPDGGLDNAVARGRKWILDHGTVTAMPSWGKTWLSIMGLFDWSGSNPMPPEFWLLPSFLPMYPAKMWCYCRMVYMPMSYLYGKRFVGPITPLILQLREELYDQPYEQVNWKQVRHECAKEDIYYPHPKIQDLLWDTLYIAIEPLLTRWPFNKLVRERALQRTMKHIHYEDENSRYITIGCVEKVLCMLACWVEDPNGDYFKKHLARVPDYIWVAEDGMKMQSFGSQQWDTGFAIQALLASNMSDEIGETLAKGHDFVKKSQVKDNPSGDFKSMHRHISKGSWTFSDQDHGWQVSDCTAEGLKCCLLFSLMPPELVGEKMEPERLYDSVNILLSLQSKNGGLAAWEPAGAPEWLELLNPTEFFADIVIEHEYVECTASAIQALVLFKKLYPGHRKKDIETFIKGAAQYIEDRQMPDGSWYGSWGVCFTYGTWFALGGLAAAGKNYDNCAAIRKGTEFLLNTQCENGGWGESYRSCPEKRYVPLEENKSNLVHTAWALMGLIHSRQAERDITPLHRAAKLLINSQLENGDFPQQEITGVFMKNCMQHYAAYRNIYPLWGIAEYRKQIPLPLR</sequence>
<comment type="function">
    <text evidence="2">Oxidosqualene cyclase that generates taraxerol, a triterpenoid product. Taraxerol is probably required to coat the leaf exterior as a defense compound against pathogens or herbivores.</text>
</comment>
<comment type="catalytic activity">
    <reaction evidence="2">
        <text>(S)-2,3-epoxysqualene = taraxerol</text>
        <dbReference type="Rhea" id="RHEA:30431"/>
        <dbReference type="ChEBI" id="CHEBI:9402"/>
        <dbReference type="ChEBI" id="CHEBI:15441"/>
        <dbReference type="EC" id="5.4.99.35"/>
    </reaction>
</comment>
<comment type="tissue specificity">
    <text evidence="2">Expressed only in the epidermal cells on both sides of the leaf and not in internal leaf tissues.</text>
</comment>
<comment type="similarity">
    <text evidence="3">Belongs to the terpene cyclase/mutase family.</text>
</comment>
<organism>
    <name type="scientific">Kalanchoe daigremontiana</name>
    <name type="common">Devil's backbone</name>
    <name type="synonym">Bryophyllum daigremontianum</name>
    <dbReference type="NCBI Taxonomy" id="23013"/>
    <lineage>
        <taxon>Eukaryota</taxon>
        <taxon>Viridiplantae</taxon>
        <taxon>Streptophyta</taxon>
        <taxon>Embryophyta</taxon>
        <taxon>Tracheophyta</taxon>
        <taxon>Spermatophyta</taxon>
        <taxon>Magnoliopsida</taxon>
        <taxon>eudicotyledons</taxon>
        <taxon>Gunneridae</taxon>
        <taxon>Pentapetalae</taxon>
        <taxon>Saxifragales</taxon>
        <taxon>Crassulaceae</taxon>
        <taxon>Kalanchoe</taxon>
    </lineage>
</organism>
<evidence type="ECO:0000250" key="1">
    <source>
        <dbReference type="UniProtKB" id="P48449"/>
    </source>
</evidence>
<evidence type="ECO:0000269" key="2">
    <source>
    </source>
</evidence>
<evidence type="ECO:0000305" key="3"/>
<reference key="1">
    <citation type="journal article" date="2010" name="J. Biol. Chem.">
        <title>Cloning and characterization of oxidosqualene cyclases from Kalanchoe daigremontiana: enzymes catalyzing up to 10 rearrangement steps yielding friedelin and other triterpenoids.</title>
        <authorList>
            <person name="Wang Z."/>
            <person name="Yeats T."/>
            <person name="Han H."/>
            <person name="Jetter R."/>
        </authorList>
    </citation>
    <scope>NUCLEOTIDE SEQUENCE [MRNA]</scope>
    <scope>FUNCTION</scope>
    <scope>CATALYTIC ACTIVITY</scope>
    <scope>TISSUE SPECIFICITY</scope>
</reference>
<feature type="chain" id="PRO_0000418480" description="Taraxerol synthase">
    <location>
        <begin position="1"/>
        <end position="779"/>
    </location>
</feature>
<feature type="repeat" description="PFTB 1">
    <location>
        <begin position="167"/>
        <end position="208"/>
    </location>
</feature>
<feature type="repeat" description="PFTB 2">
    <location>
        <begin position="659"/>
        <end position="700"/>
    </location>
</feature>
<feature type="active site" description="Proton donor" evidence="1">
    <location>
        <position position="504"/>
    </location>
</feature>
<protein>
    <recommendedName>
        <fullName>Taraxerol synthase</fullName>
        <shortName>KdTAS</shortName>
        <ecNumber>5.4.99.35</ecNumber>
    </recommendedName>
</protein>
<accession>E2IUA6</accession>
<keyword id="KW-0413">Isomerase</keyword>
<keyword id="KW-0677">Repeat</keyword>
<dbReference type="EC" id="5.4.99.35"/>
<dbReference type="EMBL" id="HM623868">
    <property type="protein sequence ID" value="ADK35123.1"/>
    <property type="molecule type" value="mRNA"/>
</dbReference>
<dbReference type="SMR" id="E2IUA6"/>
<dbReference type="BioCyc" id="MetaCyc:MONOMER-17976"/>
<dbReference type="GO" id="GO:0005811">
    <property type="term" value="C:lipid droplet"/>
    <property type="evidence" value="ECO:0007669"/>
    <property type="project" value="InterPro"/>
</dbReference>
<dbReference type="GO" id="GO:0042300">
    <property type="term" value="F:beta-amyrin synthase activity"/>
    <property type="evidence" value="ECO:0007669"/>
    <property type="project" value="TreeGrafter"/>
</dbReference>
<dbReference type="GO" id="GO:0016866">
    <property type="term" value="F:intramolecular transferase activity"/>
    <property type="evidence" value="ECO:0000314"/>
    <property type="project" value="UniProtKB"/>
</dbReference>
<dbReference type="GO" id="GO:0016104">
    <property type="term" value="P:triterpenoid biosynthetic process"/>
    <property type="evidence" value="ECO:0000314"/>
    <property type="project" value="UniProtKB"/>
</dbReference>
<dbReference type="CDD" id="cd02892">
    <property type="entry name" value="SQCY_1"/>
    <property type="match status" value="1"/>
</dbReference>
<dbReference type="FunFam" id="1.50.10.20:FF:000011">
    <property type="entry name" value="Terpene cyclase/mutase family member"/>
    <property type="match status" value="1"/>
</dbReference>
<dbReference type="FunFam" id="1.50.10.20:FF:000064">
    <property type="entry name" value="Uncharacterized protein"/>
    <property type="match status" value="1"/>
</dbReference>
<dbReference type="Gene3D" id="1.50.10.20">
    <property type="match status" value="2"/>
</dbReference>
<dbReference type="InterPro" id="IPR032696">
    <property type="entry name" value="SQ_cyclase_C"/>
</dbReference>
<dbReference type="InterPro" id="IPR032697">
    <property type="entry name" value="SQ_cyclase_N"/>
</dbReference>
<dbReference type="InterPro" id="IPR018333">
    <property type="entry name" value="Squalene_cyclase"/>
</dbReference>
<dbReference type="InterPro" id="IPR002365">
    <property type="entry name" value="Terpene_synthase_CS"/>
</dbReference>
<dbReference type="InterPro" id="IPR008930">
    <property type="entry name" value="Terpenoid_cyclase/PrenylTrfase"/>
</dbReference>
<dbReference type="NCBIfam" id="TIGR01787">
    <property type="entry name" value="squalene_cyclas"/>
    <property type="match status" value="1"/>
</dbReference>
<dbReference type="PANTHER" id="PTHR11764:SF58">
    <property type="entry name" value="BETA-AMYRIN SYNTHASE-RELATED"/>
    <property type="match status" value="1"/>
</dbReference>
<dbReference type="PANTHER" id="PTHR11764">
    <property type="entry name" value="TERPENE CYCLASE/MUTASE FAMILY MEMBER"/>
    <property type="match status" value="1"/>
</dbReference>
<dbReference type="Pfam" id="PF13243">
    <property type="entry name" value="SQHop_cyclase_C"/>
    <property type="match status" value="1"/>
</dbReference>
<dbReference type="Pfam" id="PF13249">
    <property type="entry name" value="SQHop_cyclase_N"/>
    <property type="match status" value="1"/>
</dbReference>
<dbReference type="SFLD" id="SFLDG01016">
    <property type="entry name" value="Prenyltransferase_Like_2"/>
    <property type="match status" value="1"/>
</dbReference>
<dbReference type="SUPFAM" id="SSF48239">
    <property type="entry name" value="Terpenoid cyclases/Protein prenyltransferases"/>
    <property type="match status" value="2"/>
</dbReference>
<dbReference type="PROSITE" id="PS01074">
    <property type="entry name" value="TERPENE_SYNTHASES"/>
    <property type="match status" value="1"/>
</dbReference>
<proteinExistence type="evidence at protein level"/>
<name>TARS_KALDA</name>